<protein>
    <recommendedName>
        <fullName evidence="1">Large ribosomal subunit protein eL40</fullName>
    </recommendedName>
    <alternativeName>
        <fullName evidence="2">50S ribosomal protein L40e</fullName>
    </alternativeName>
</protein>
<dbReference type="EMBL" id="AE009441">
    <property type="protein sequence ID" value="AAL64791.1"/>
    <property type="molecule type" value="Genomic_DNA"/>
</dbReference>
<dbReference type="RefSeq" id="WP_011009259.1">
    <property type="nucleotide sequence ID" value="NC_003364.1"/>
</dbReference>
<dbReference type="SMR" id="Q8ZTH0"/>
<dbReference type="FunCoup" id="Q8ZTH0">
    <property type="interactions" value="59"/>
</dbReference>
<dbReference type="STRING" id="178306.PAE3255"/>
<dbReference type="EnsemblBacteria" id="AAL64791">
    <property type="protein sequence ID" value="AAL64791"/>
    <property type="gene ID" value="PAE3255"/>
</dbReference>
<dbReference type="GeneID" id="1463976"/>
<dbReference type="KEGG" id="pai:PAE3255"/>
<dbReference type="PATRIC" id="fig|178306.9.peg.2451"/>
<dbReference type="eggNOG" id="arCOG04049">
    <property type="taxonomic scope" value="Archaea"/>
</dbReference>
<dbReference type="HOGENOM" id="CLU_175093_1_0_2"/>
<dbReference type="InParanoid" id="Q8ZTH0"/>
<dbReference type="Proteomes" id="UP000002439">
    <property type="component" value="Chromosome"/>
</dbReference>
<dbReference type="GO" id="GO:1990904">
    <property type="term" value="C:ribonucleoprotein complex"/>
    <property type="evidence" value="ECO:0007669"/>
    <property type="project" value="UniProtKB-KW"/>
</dbReference>
<dbReference type="GO" id="GO:0005840">
    <property type="term" value="C:ribosome"/>
    <property type="evidence" value="ECO:0007669"/>
    <property type="project" value="UniProtKB-KW"/>
</dbReference>
<dbReference type="GO" id="GO:0003735">
    <property type="term" value="F:structural constituent of ribosome"/>
    <property type="evidence" value="ECO:0007669"/>
    <property type="project" value="InterPro"/>
</dbReference>
<dbReference type="GO" id="GO:0006412">
    <property type="term" value="P:translation"/>
    <property type="evidence" value="ECO:0007669"/>
    <property type="project" value="UniProtKB-UniRule"/>
</dbReference>
<dbReference type="Gene3D" id="4.10.1060.50">
    <property type="match status" value="1"/>
</dbReference>
<dbReference type="HAMAP" id="MF_00788">
    <property type="entry name" value="Ribosomal_eL40"/>
    <property type="match status" value="1"/>
</dbReference>
<dbReference type="InterPro" id="IPR023657">
    <property type="entry name" value="Ribosomal_eL40_arc"/>
</dbReference>
<dbReference type="InterPro" id="IPR001975">
    <property type="entry name" value="Ribosomal_eL40_dom"/>
</dbReference>
<dbReference type="InterPro" id="IPR038587">
    <property type="entry name" value="Ribosomal_eL40_sf"/>
</dbReference>
<dbReference type="InterPro" id="IPR011332">
    <property type="entry name" value="Ribosomal_zn-bd"/>
</dbReference>
<dbReference type="NCBIfam" id="NF003161">
    <property type="entry name" value="PRK04136.1"/>
    <property type="match status" value="1"/>
</dbReference>
<dbReference type="PANTHER" id="PTHR39649">
    <property type="entry name" value="50S RIBOSOMAL PROTEIN L40E"/>
    <property type="match status" value="1"/>
</dbReference>
<dbReference type="PANTHER" id="PTHR39649:SF1">
    <property type="entry name" value="LARGE RIBOSOMAL SUBUNIT PROTEIN EL40"/>
    <property type="match status" value="1"/>
</dbReference>
<dbReference type="Pfam" id="PF01020">
    <property type="entry name" value="Ribosomal_L40e"/>
    <property type="match status" value="1"/>
</dbReference>
<dbReference type="SMART" id="SM01377">
    <property type="entry name" value="Ribosomal_L40e"/>
    <property type="match status" value="1"/>
</dbReference>
<dbReference type="SUPFAM" id="SSF57829">
    <property type="entry name" value="Zn-binding ribosomal proteins"/>
    <property type="match status" value="1"/>
</dbReference>
<keyword id="KW-1185">Reference proteome</keyword>
<keyword id="KW-0687">Ribonucleoprotein</keyword>
<keyword id="KW-0689">Ribosomal protein</keyword>
<accession>Q8ZTH0</accession>
<feature type="chain" id="PRO_0000138786" description="Large ribosomal subunit protein eL40">
    <location>
        <begin position="1"/>
        <end position="53"/>
    </location>
</feature>
<sequence length="53" mass="6385">MPITLDPEKLAIVMKHRFQYKICRECGAKNPPDAVKCRRCRSRNLRPKRFRKK</sequence>
<comment type="similarity">
    <text evidence="1">Belongs to the eukaryotic ribosomal protein eL40 family.</text>
</comment>
<gene>
    <name evidence="1" type="primary">rpl40e</name>
    <name type="ordered locus">PAE3255</name>
</gene>
<reference key="1">
    <citation type="journal article" date="2002" name="Proc. Natl. Acad. Sci. U.S.A.">
        <title>Genome sequence of the hyperthermophilic crenarchaeon Pyrobaculum aerophilum.</title>
        <authorList>
            <person name="Fitz-Gibbon S.T."/>
            <person name="Ladner H."/>
            <person name="Kim U.-J."/>
            <person name="Stetter K.O."/>
            <person name="Simon M.I."/>
            <person name="Miller J.H."/>
        </authorList>
    </citation>
    <scope>NUCLEOTIDE SEQUENCE [LARGE SCALE GENOMIC DNA]</scope>
    <source>
        <strain>ATCC 51768 / DSM 7523 / JCM 9630 / CIP 104966 / NBRC 100827 / IM2</strain>
    </source>
</reference>
<proteinExistence type="inferred from homology"/>
<name>RL40_PYRAE</name>
<organism>
    <name type="scientific">Pyrobaculum aerophilum (strain ATCC 51768 / DSM 7523 / JCM 9630 / CIP 104966 / NBRC 100827 / IM2)</name>
    <dbReference type="NCBI Taxonomy" id="178306"/>
    <lineage>
        <taxon>Archaea</taxon>
        <taxon>Thermoproteota</taxon>
        <taxon>Thermoprotei</taxon>
        <taxon>Thermoproteales</taxon>
        <taxon>Thermoproteaceae</taxon>
        <taxon>Pyrobaculum</taxon>
    </lineage>
</organism>
<evidence type="ECO:0000255" key="1">
    <source>
        <dbReference type="HAMAP-Rule" id="MF_00788"/>
    </source>
</evidence>
<evidence type="ECO:0000305" key="2"/>